<keyword id="KW-0903">Direct protein sequencing</keyword>
<keyword id="KW-1015">Disulfide bond</keyword>
<keyword id="KW-0960">Knottin</keyword>
<keyword id="KW-0611">Plant defense</keyword>
<accession>B3EWH5</accession>
<sequence length="79" mass="8575">MVGVNSLRSALYLIVLILFVQLTYFSDARVMDVDLSRAFLPLTGIGCGESCVWIPCVSAAIGCSCSNKICYRNGIIPKK</sequence>
<protein>
    <recommendedName>
        <fullName evidence="6">Cyclotide phyb-A</fullName>
    </recommendedName>
</protein>
<proteinExistence type="evidence at protein level"/>
<feature type="propeptide" id="PRO_0000419342" evidence="4">
    <location>
        <begin position="1"/>
        <end position="43"/>
    </location>
</feature>
<feature type="peptide" id="PRO_0000419343" description="Cyclotide phyb-A" evidence="2 4">
    <location>
        <begin position="44"/>
        <end position="73"/>
    </location>
</feature>
<feature type="propeptide" id="PRO_0000419344" evidence="4">
    <location>
        <begin position="74"/>
        <end position="79"/>
    </location>
</feature>
<feature type="disulfide bond" evidence="1 2">
    <location>
        <begin position="47"/>
        <end position="63"/>
    </location>
</feature>
<feature type="disulfide bond" evidence="1 2">
    <location>
        <begin position="51"/>
        <end position="65"/>
    </location>
</feature>
<feature type="disulfide bond" evidence="1 2">
    <location>
        <begin position="56"/>
        <end position="70"/>
    </location>
</feature>
<feature type="cross-link" description="Cyclopeptide (Gly-Asn)" evidence="4">
    <location>
        <begin position="44"/>
        <end position="73"/>
    </location>
</feature>
<name>CYCA_PETHY</name>
<comment type="function">
    <text evidence="1 2">Probably participates in a plant defense mechanism.</text>
</comment>
<comment type="tissue specificity">
    <text evidence="4">Expressed in midvein, lamina and periphery of leaves (at protein level).</text>
</comment>
<comment type="domain">
    <text evidence="4">The presence of a 'disulfide through disulfide knot' structurally defines this protein as a knottin.</text>
</comment>
<comment type="PTM">
    <text evidence="2 4">This is a cyclic peptide.</text>
</comment>
<comment type="PTM">
    <text evidence="4">Contains 3 disulfide bonds.</text>
</comment>
<comment type="mass spectrometry" mass="3068.29" method="MALDI" evidence="4"/>
<comment type="similarity">
    <text evidence="2">Belongs to the cyclotide family. Bracelet subfamily.</text>
</comment>
<organism>
    <name type="scientific">Petunia hybrida</name>
    <name type="common">Petunia</name>
    <dbReference type="NCBI Taxonomy" id="4102"/>
    <lineage>
        <taxon>Eukaryota</taxon>
        <taxon>Viridiplantae</taxon>
        <taxon>Streptophyta</taxon>
        <taxon>Embryophyta</taxon>
        <taxon>Tracheophyta</taxon>
        <taxon>Spermatophyta</taxon>
        <taxon>Magnoliopsida</taxon>
        <taxon>eudicotyledons</taxon>
        <taxon>Gunneridae</taxon>
        <taxon>Pentapetalae</taxon>
        <taxon>asterids</taxon>
        <taxon>lamiids</taxon>
        <taxon>Solanales</taxon>
        <taxon>Solanaceae</taxon>
        <taxon>Petunioideae</taxon>
        <taxon>Petunia</taxon>
    </lineage>
</organism>
<evidence type="ECO:0000250" key="1">
    <source>
        <dbReference type="UniProtKB" id="P56254"/>
    </source>
</evidence>
<evidence type="ECO:0000255" key="2">
    <source>
        <dbReference type="PROSITE-ProRule" id="PRU00395"/>
    </source>
</evidence>
<evidence type="ECO:0000269" key="3">
    <source>
    </source>
</evidence>
<evidence type="ECO:0000269" key="4">
    <source>
    </source>
</evidence>
<evidence type="ECO:0000269" key="5">
    <source ref="1"/>
</evidence>
<evidence type="ECO:0000303" key="6">
    <source>
    </source>
</evidence>
<evidence type="ECO:0000305" key="7"/>
<dbReference type="EMBL" id="DC242826">
    <property type="status" value="NOT_ANNOTATED_CDS"/>
    <property type="molecule type" value="mRNA"/>
</dbReference>
<dbReference type="EMBL" id="FN035504">
    <property type="status" value="NOT_ANNOTATED_CDS"/>
    <property type="molecule type" value="mRNA"/>
</dbReference>
<dbReference type="GO" id="GO:0006952">
    <property type="term" value="P:defense response"/>
    <property type="evidence" value="ECO:0007669"/>
    <property type="project" value="UniProtKB-KW"/>
</dbReference>
<dbReference type="InterPro" id="IPR005535">
    <property type="entry name" value="Cyclotide"/>
</dbReference>
<dbReference type="InterPro" id="IPR012323">
    <property type="entry name" value="Cyclotide_bracelet_CS"/>
</dbReference>
<dbReference type="InterPro" id="IPR036146">
    <property type="entry name" value="Cyclotide_sf"/>
</dbReference>
<dbReference type="Pfam" id="PF03784">
    <property type="entry name" value="Cyclotide"/>
    <property type="match status" value="1"/>
</dbReference>
<dbReference type="SUPFAM" id="SSF57038">
    <property type="entry name" value="Cyclotides"/>
    <property type="match status" value="1"/>
</dbReference>
<dbReference type="PROSITE" id="PS51052">
    <property type="entry name" value="CYCLOTIDE"/>
    <property type="match status" value="1"/>
</dbReference>
<dbReference type="PROSITE" id="PS60008">
    <property type="entry name" value="CYCLOTIDE_BRACELET"/>
    <property type="match status" value="1"/>
</dbReference>
<reference evidence="7" key="1">
    <citation type="journal article" date="2007" name="Plant Sci.">
        <title>Analysis of expressed sequence tags from Petunia flowers.</title>
        <authorList>
            <person name="Shimamura K."/>
            <person name="Ishimizu T."/>
            <person name="Nishimura K."/>
            <person name="Matsubara K."/>
            <person name="Kodama H."/>
            <person name="Watanabe H."/>
            <person name="Hase S."/>
            <person name="Ando T."/>
        </authorList>
    </citation>
    <scope>NUCLEOTIDE SEQUENCE [MRNA]</scope>
    <source>
        <tissue evidence="5">Flower</tissue>
    </source>
</reference>
<reference evidence="7" key="2">
    <citation type="journal article" date="2010" name="Plant J.">
        <title>Phosphate systemically inhibits development of arbuscular mycorrhiza in Petunia hybrida and represses genes involved in mycorrhizal functioning.</title>
        <authorList>
            <person name="Breuillin F."/>
            <person name="Schramm J."/>
            <person name="Hajirezaei M."/>
            <person name="Ahkami A."/>
            <person name="Favre P."/>
            <person name="Druege U."/>
            <person name="Hause B."/>
            <person name="Bucher M."/>
            <person name="Kretzschmar T."/>
            <person name="Bossolini E."/>
            <person name="Kuhlemeier C."/>
            <person name="Martinoia E."/>
            <person name="Franken P."/>
            <person name="Scholz U."/>
            <person name="Reinhardt D."/>
        </authorList>
    </citation>
    <scope>NUCLEOTIDE SEQUENCE [MRNA] OF 12-79</scope>
    <source>
        <tissue evidence="3">Root</tissue>
    </source>
</reference>
<reference evidence="7" key="3">
    <citation type="journal article" date="2012" name="J. Biol. Chem.">
        <title>Cyclotides associate with leaf vasculature and are the products of a novel precursor in Petunia (Solanaceae).</title>
        <authorList>
            <person name="Poth A.G."/>
            <person name="Mylne J.S."/>
            <person name="Grassl J."/>
            <person name="Lyons R.E."/>
            <person name="Millar A.H."/>
            <person name="Colgrave M.L."/>
            <person name="Craik D.J."/>
        </authorList>
    </citation>
    <scope>PROTEIN SEQUENCE OF 44-73</scope>
    <scope>TISSUE SPECIFICITY</scope>
    <scope>DOMAIN</scope>
    <scope>DISULFIDE BONDS</scope>
    <scope>CYCLIZATION</scope>
    <scope>MASS SPECTROMETRY</scope>
    <source>
        <tissue evidence="4">Leaf</tissue>
    </source>
</reference>